<proteinExistence type="evidence at protein level"/>
<organism>
    <name type="scientific">Mus musculus</name>
    <name type="common">Mouse</name>
    <dbReference type="NCBI Taxonomy" id="10090"/>
    <lineage>
        <taxon>Eukaryota</taxon>
        <taxon>Metazoa</taxon>
        <taxon>Chordata</taxon>
        <taxon>Craniata</taxon>
        <taxon>Vertebrata</taxon>
        <taxon>Euteleostomi</taxon>
        <taxon>Mammalia</taxon>
        <taxon>Eutheria</taxon>
        <taxon>Euarchontoglires</taxon>
        <taxon>Glires</taxon>
        <taxon>Rodentia</taxon>
        <taxon>Myomorpha</taxon>
        <taxon>Muroidea</taxon>
        <taxon>Muridae</taxon>
        <taxon>Murinae</taxon>
        <taxon>Mus</taxon>
        <taxon>Mus</taxon>
    </lineage>
</organism>
<feature type="chain" id="PRO_0000265089" description="Sodium/potassium-transporting ATPase subunit beta-1-interacting protein 2">
    <location>
        <begin position="1"/>
        <end position="208"/>
    </location>
</feature>
<feature type="transmembrane region" description="Helical" evidence="1">
    <location>
        <begin position="1"/>
        <end position="23"/>
    </location>
</feature>
<feature type="transmembrane region" description="Helical" evidence="1">
    <location>
        <begin position="35"/>
        <end position="55"/>
    </location>
</feature>
<feature type="transmembrane region" description="Helical" evidence="1">
    <location>
        <begin position="64"/>
        <end position="84"/>
    </location>
</feature>
<feature type="transmembrane region" description="Helical" evidence="1">
    <location>
        <begin position="148"/>
        <end position="168"/>
    </location>
</feature>
<feature type="splice variant" id="VSP_021903" description="In isoform 2." evidence="3 4 5">
    <original>LAGFIYACYVVRCITEEEDSFDFIGGFDSYGYQGPQKTSHLQLQPMYMSK</original>
    <variation>VSVDNKPLLLVFLELFFLGKHCVQKDCMLMWNVCGHFF</variation>
    <location>
        <begin position="159"/>
        <end position="208"/>
    </location>
</feature>
<feature type="splice variant" id="VSP_029299" description="In isoform 3." evidence="5">
    <original>MSK</original>
    <variation>IKFPWITTDSKFYISASSDMLNCKRRSK</variation>
    <location>
        <begin position="206"/>
        <end position="208"/>
    </location>
</feature>
<feature type="sequence conflict" description="In Ref. 1; AAY68415/AAY68416." evidence="6" ref="1">
    <original>V</original>
    <variation>G</variation>
    <location>
        <position position="73"/>
    </location>
</feature>
<feature type="sequence conflict" description="In Ref. 2; AAX33293." evidence="6" ref="2">
    <original>N</original>
    <variation>Y</variation>
    <location>
        <position position="111"/>
    </location>
</feature>
<feature type="sequence conflict" description="In Ref. 2; AAX33293." evidence="6" ref="2">
    <original>S</original>
    <variation>P</variation>
    <location>
        <position position="152"/>
    </location>
</feature>
<accession>Q4PNJ2</accession>
<accession>A6MHP5</accession>
<accession>A6MHP6</accession>
<accession>A6MHP7</accession>
<accession>B2RUC0</accession>
<accession>Q4PNJ3</accession>
<accession>Q5BLW8</accession>
<reference key="1">
    <citation type="journal article" date="2005" name="Hum. Mutat.">
        <title>Molecular characterization of a t(2;6) balanced translocation that is associated with a complex phenotype and leads to truncation of the TCBA1 gene.</title>
        <authorList>
            <person name="Bocciardi R."/>
            <person name="Giorda R."/>
            <person name="Marigo V."/>
            <person name="Zordan P."/>
            <person name="Montanaro D."/>
            <person name="Gimelli S."/>
            <person name="Seri M."/>
            <person name="Lerone M."/>
            <person name="Ravazzolo R."/>
            <person name="Gimelli G."/>
        </authorList>
    </citation>
    <scope>NUCLEOTIDE SEQUENCE [MRNA] (ISOFORMS 1 AND 2)</scope>
    <source>
        <strain>FVB/NJ</strain>
        <tissue>Brain</tissue>
    </source>
</reference>
<reference key="2">
    <citation type="journal article" date="2006" name="J. Med. Genet.">
        <title>Disruption of TCBA1 associated with a de novo t(1;6)(q32.2;q22.3) presenting in a child with developmental delay and recurrent infections.</title>
        <authorList>
            <person name="Yue Y."/>
            <person name="Stout K."/>
            <person name="Grossmann B."/>
            <person name="Zechner U."/>
            <person name="Brinckmann A."/>
            <person name="White C."/>
            <person name="Pilz D.T."/>
            <person name="Haaf T."/>
        </authorList>
    </citation>
    <scope>NUCLEOTIDE SEQUENCE [MRNA] (ISOFORM 1)</scope>
</reference>
<reference key="3">
    <citation type="journal article" date="2007" name="Hum. Mol. Genet.">
        <title>A novel family of transmembrane proteins interacting with beta subunits of the Na,K-ATPase.</title>
        <authorList>
            <person name="Gorokhova S."/>
            <person name="Bibert S."/>
            <person name="Geering K."/>
            <person name="Heintz N."/>
        </authorList>
    </citation>
    <scope>NUCLEOTIDE SEQUENCE [MRNA] (ISOFORMS 1; 2 AND 3)</scope>
    <scope>INTERACTION WITH ATP1B1</scope>
    <scope>TISSUE SPECIFICITY</scope>
    <source>
        <strain>C57BL/6J</strain>
    </source>
</reference>
<reference key="4">
    <citation type="journal article" date="2004" name="Genome Res.">
        <title>The status, quality, and expansion of the NIH full-length cDNA project: the Mammalian Gene Collection (MGC).</title>
        <authorList>
            <consortium name="The MGC Project Team"/>
        </authorList>
    </citation>
    <scope>NUCLEOTIDE SEQUENCE [LARGE SCALE MRNA] (ISOFORM 2)</scope>
    <source>
        <tissue>Brain</tissue>
    </source>
</reference>
<evidence type="ECO:0000255" key="1"/>
<evidence type="ECO:0000269" key="2">
    <source>
    </source>
</evidence>
<evidence type="ECO:0000303" key="3">
    <source>
    </source>
</evidence>
<evidence type="ECO:0000303" key="4">
    <source>
    </source>
</evidence>
<evidence type="ECO:0000303" key="5">
    <source>
    </source>
</evidence>
<evidence type="ECO:0000305" key="6"/>
<gene>
    <name type="primary">Nkain2</name>
    <name type="synonym">Tcba1</name>
</gene>
<dbReference type="EMBL" id="DQ065606">
    <property type="protein sequence ID" value="AAY68415.1"/>
    <property type="molecule type" value="mRNA"/>
</dbReference>
<dbReference type="EMBL" id="DQ065607">
    <property type="protein sequence ID" value="AAY68416.1"/>
    <property type="molecule type" value="mRNA"/>
</dbReference>
<dbReference type="EMBL" id="AY940478">
    <property type="protein sequence ID" value="AAX33293.1"/>
    <property type="molecule type" value="mRNA"/>
</dbReference>
<dbReference type="EMBL" id="EF058049">
    <property type="protein sequence ID" value="ABN51167.1"/>
    <property type="molecule type" value="mRNA"/>
</dbReference>
<dbReference type="EMBL" id="EF058050">
    <property type="protein sequence ID" value="ABN51168.1"/>
    <property type="molecule type" value="mRNA"/>
</dbReference>
<dbReference type="EMBL" id="EF058051">
    <property type="protein sequence ID" value="ABN51169.1"/>
    <property type="molecule type" value="mRNA"/>
</dbReference>
<dbReference type="EMBL" id="BC141063">
    <property type="protein sequence ID" value="AAI41064.1"/>
    <property type="molecule type" value="mRNA"/>
</dbReference>
<dbReference type="CCDS" id="CCDS78805.1">
    <molecule id="Q4PNJ2-1"/>
</dbReference>
<dbReference type="CCDS" id="CCDS87984.1">
    <molecule id="Q4PNJ2-2"/>
</dbReference>
<dbReference type="RefSeq" id="NP_001013429.2">
    <molecule id="Q4PNJ2-1"/>
    <property type="nucleotide sequence ID" value="NM_001013411.2"/>
</dbReference>
<dbReference type="RefSeq" id="NP_001020457.2">
    <molecule id="Q4PNJ2-2"/>
    <property type="nucleotide sequence ID" value="NM_001025286.2"/>
</dbReference>
<dbReference type="SMR" id="Q4PNJ2"/>
<dbReference type="FunCoup" id="Q4PNJ2">
    <property type="interactions" value="841"/>
</dbReference>
<dbReference type="STRING" id="10090.ENSMUSP00000140463"/>
<dbReference type="GlyGen" id="Q4PNJ2">
    <property type="glycosylation" value="2 sites, 1 N-linked glycan (1 site)"/>
</dbReference>
<dbReference type="PhosphoSitePlus" id="Q4PNJ2"/>
<dbReference type="PaxDb" id="10090-ENSMUSP00000140463"/>
<dbReference type="ProteomicsDB" id="293659">
    <molecule id="Q4PNJ2-1"/>
</dbReference>
<dbReference type="Antibodypedia" id="51965">
    <property type="antibodies" value="61 antibodies from 15 providers"/>
</dbReference>
<dbReference type="Ensembl" id="ENSMUST00000191234.7">
    <molecule id="Q4PNJ2-1"/>
    <property type="protein sequence ID" value="ENSMUSP00000140463.2"/>
    <property type="gene ID" value="ENSMUSG00000069670.10"/>
</dbReference>
<dbReference type="Ensembl" id="ENSMUST00000219125.2">
    <molecule id="Q4PNJ2-2"/>
    <property type="protein sequence ID" value="ENSMUSP00000151959.2"/>
    <property type="gene ID" value="ENSMUSG00000069670.10"/>
</dbReference>
<dbReference type="GeneID" id="432450"/>
<dbReference type="KEGG" id="mmu:432450"/>
<dbReference type="UCSC" id="uc007etw.2">
    <molecule id="Q4PNJ2-1"/>
    <property type="organism name" value="mouse"/>
</dbReference>
<dbReference type="UCSC" id="uc007ety.2">
    <molecule id="Q4PNJ2-2"/>
    <property type="organism name" value="mouse"/>
</dbReference>
<dbReference type="AGR" id="MGI:1923447"/>
<dbReference type="CTD" id="154215"/>
<dbReference type="MGI" id="MGI:1923447">
    <property type="gene designation" value="Nkain2"/>
</dbReference>
<dbReference type="VEuPathDB" id="HostDB:ENSMUSG00000069670"/>
<dbReference type="eggNOG" id="KOG4556">
    <property type="taxonomic scope" value="Eukaryota"/>
</dbReference>
<dbReference type="GeneTree" id="ENSGT00940000160565"/>
<dbReference type="HOGENOM" id="CLU_090781_0_0_1"/>
<dbReference type="InParanoid" id="Q4PNJ2"/>
<dbReference type="OMA" id="MCLQPMF"/>
<dbReference type="OrthoDB" id="69705at9989"/>
<dbReference type="PhylomeDB" id="Q4PNJ2"/>
<dbReference type="BioGRID-ORCS" id="432450">
    <property type="hits" value="0 hits in 70 CRISPR screens"/>
</dbReference>
<dbReference type="ChiTaRS" id="Nkain2">
    <property type="organism name" value="mouse"/>
</dbReference>
<dbReference type="PRO" id="PR:Q4PNJ2"/>
<dbReference type="Proteomes" id="UP000000589">
    <property type="component" value="Chromosome 10"/>
</dbReference>
<dbReference type="RNAct" id="Q4PNJ2">
    <property type="molecule type" value="protein"/>
</dbReference>
<dbReference type="Bgee" id="ENSMUSG00000069670">
    <property type="expression patterns" value="Expressed in sciatic nerve and 116 other cell types or tissues"/>
</dbReference>
<dbReference type="ExpressionAtlas" id="Q4PNJ2">
    <property type="expression patterns" value="baseline and differential"/>
</dbReference>
<dbReference type="GO" id="GO:0005886">
    <property type="term" value="C:plasma membrane"/>
    <property type="evidence" value="ECO:0000314"/>
    <property type="project" value="MGI"/>
</dbReference>
<dbReference type="InterPro" id="IPR008516">
    <property type="entry name" value="Na/K-Atpase_Interacting"/>
</dbReference>
<dbReference type="PANTHER" id="PTHR13084:SF3">
    <property type="entry name" value="SODIUM_POTASSIUM-TRANSPORTING ATPASE SUBUNIT BETA-1-INTERACTING PROTEIN 2"/>
    <property type="match status" value="1"/>
</dbReference>
<dbReference type="PANTHER" id="PTHR13084">
    <property type="entry name" value="T-CELL LYMPHOMA BREAKPOINT-ASSOCIATED TARGET 1-RELATED"/>
    <property type="match status" value="1"/>
</dbReference>
<dbReference type="Pfam" id="PF05640">
    <property type="entry name" value="NKAIN"/>
    <property type="match status" value="1"/>
</dbReference>
<comment type="subunit">
    <text evidence="2">Interacts with ATP1B1.</text>
</comment>
<comment type="subcellular location">
    <subcellularLocation>
        <location evidence="6">Cell membrane</location>
        <topology evidence="6">Multi-pass membrane protein</topology>
    </subcellularLocation>
</comment>
<comment type="alternative products">
    <event type="alternative splicing"/>
    <isoform>
        <id>Q4PNJ2-1</id>
        <name>1</name>
        <name>Transcript variant 1</name>
        <sequence type="displayed"/>
    </isoform>
    <isoform>
        <id>Q4PNJ2-2</id>
        <name>2</name>
        <name>Transcript variant 3</name>
        <sequence type="described" ref="VSP_021903"/>
    </isoform>
    <isoform>
        <id>Q4PNJ2-3</id>
        <name>3</name>
        <name>Transcript variant 2</name>
        <sequence type="described" ref="VSP_029299"/>
    </isoform>
</comment>
<comment type="tissue specificity">
    <text evidence="2">Detected in the brain only and specifically in neurons; expressed in multiple regions such as cerebral cortex, thalamus, cerebellum, olfactory bulb and brainstem, but not in the hippocampus.</text>
</comment>
<comment type="similarity">
    <text evidence="6">Belongs to the NKAIN family.</text>
</comment>
<name>NKAI2_MOUSE</name>
<keyword id="KW-0025">Alternative splicing</keyword>
<keyword id="KW-1003">Cell membrane</keyword>
<keyword id="KW-0472">Membrane</keyword>
<keyword id="KW-1185">Reference proteome</keyword>
<keyword id="KW-0812">Transmembrane</keyword>
<keyword id="KW-1133">Transmembrane helix</keyword>
<sequence length="208" mass="23895">MGYCSGRCTLIFICGMQLVCVLERQIFDFLGYQWAPILANFVHIIIVILGLFGTIQYRPRYVTGYAVWLVLWVTWNVFVICFYLEAGDLSKETDLILTFNISMHRSWWMENGPGCMVTSVTPAPDWAPEDHRYITVSGCFLDYQYIEVAHSSLQIVLALAGFIYACYVVRCITEEEDSFDFIGGFDSYGYQGPQKTSHLQLQPMYMSK</sequence>
<protein>
    <recommendedName>
        <fullName>Sodium/potassium-transporting ATPase subunit beta-1-interacting protein 2</fullName>
        <shortName>Na(+)/K(+)-transporting ATPase subunit beta-1-interacting protein 2</shortName>
    </recommendedName>
    <alternativeName>
        <fullName>T-cell lymphoma breakpoint-associated target protein 1</fullName>
    </alternativeName>
</protein>